<gene>
    <name type="primary">TIMM23</name>
    <name type="synonym">TIM23</name>
</gene>
<evidence type="ECO:0000250" key="1">
    <source>
        <dbReference type="UniProtKB" id="O14925"/>
    </source>
</evidence>
<evidence type="ECO:0000255" key="2"/>
<evidence type="ECO:0000305" key="3"/>
<protein>
    <recommendedName>
        <fullName>Mitochondrial import inner membrane translocase subunit Tim23</fullName>
    </recommendedName>
</protein>
<organism>
    <name type="scientific">Bos taurus</name>
    <name type="common">Bovine</name>
    <dbReference type="NCBI Taxonomy" id="9913"/>
    <lineage>
        <taxon>Eukaryota</taxon>
        <taxon>Metazoa</taxon>
        <taxon>Chordata</taxon>
        <taxon>Craniata</taxon>
        <taxon>Vertebrata</taxon>
        <taxon>Euteleostomi</taxon>
        <taxon>Mammalia</taxon>
        <taxon>Eutheria</taxon>
        <taxon>Laurasiatheria</taxon>
        <taxon>Artiodactyla</taxon>
        <taxon>Ruminantia</taxon>
        <taxon>Pecora</taxon>
        <taxon>Bovidae</taxon>
        <taxon>Bovinae</taxon>
        <taxon>Bos</taxon>
    </lineage>
</organism>
<sequence>MEGGGGSGNKTTGGLAGFFGAGGAGYSHADLAGVPLTGMNPLSPYLNVDPRYLVQDTDEFILPTGANKTRGRFELAFFTIGGCCMTGAAFGAMNGLRLGLKETQNMAWSKPRNVQILNMVTRQGALWANTLGSLALLYSAFGVIIEKTRGAEDDLNTVAAGTMTGMLYKCTGGLRGAARGGLAGLTLTGLYALYNNWEHMKGSVLQQSL</sequence>
<keyword id="KW-0472">Membrane</keyword>
<keyword id="KW-0496">Mitochondrion</keyword>
<keyword id="KW-0999">Mitochondrion inner membrane</keyword>
<keyword id="KW-0653">Protein transport</keyword>
<keyword id="KW-1185">Reference proteome</keyword>
<keyword id="KW-0811">Translocation</keyword>
<keyword id="KW-0812">Transmembrane</keyword>
<keyword id="KW-1133">Transmembrane helix</keyword>
<keyword id="KW-0813">Transport</keyword>
<comment type="function">
    <text evidence="1">Essential component of the TIM23 complex, a complex that mediates the translocation of transit peptide-containing proteins across the mitochondrial inner membrane. Has a role in the activation of stress-induced mitophagy by protecting PINK1 from OMA1-mediated degradation and facilitating its accumulation at the outer mitochondrial membrane in response to depolarization.</text>
</comment>
<comment type="subunit">
    <text evidence="1">Component of the TIM23 complex at least composed of TIMM23, TIMM17 (TIMM17A or TIMM17B) and TIMM50; within this complex, directly interacts with TIMM50. The complex interacts with the TIMM44 component of the PAM complex and with DNAJC15. Upon mitochondrial depolarization, interacts with PINK1; the interaction is required for PINK1 accumulation at the outer mitochondrial membrane, kinase activation by autophosphorylation and PRKN recruitement to mitochondria.</text>
</comment>
<comment type="subcellular location">
    <subcellularLocation>
        <location evidence="1">Mitochondrion inner membrane</location>
        <topology evidence="2">Multi-pass membrane protein</topology>
    </subcellularLocation>
</comment>
<comment type="similarity">
    <text evidence="3">Belongs to the Tim17/Tim22/Tim23 family.</text>
</comment>
<feature type="chain" id="PRO_0000354674" description="Mitochondrial import inner membrane translocase subunit Tim23">
    <location>
        <begin position="1"/>
        <end position="209"/>
    </location>
</feature>
<feature type="transmembrane region" description="Helical" evidence="2">
    <location>
        <begin position="73"/>
        <end position="93"/>
    </location>
</feature>
<feature type="transmembrane region" description="Helical" evidence="2">
    <location>
        <begin position="125"/>
        <end position="145"/>
    </location>
</feature>
<feature type="transmembrane region" description="Helical" evidence="2">
    <location>
        <begin position="172"/>
        <end position="194"/>
    </location>
</feature>
<reference key="1">
    <citation type="submission" date="2007-03" db="EMBL/GenBank/DDBJ databases">
        <authorList>
            <consortium name="NIH - Mammalian Gene Collection (MGC) project"/>
        </authorList>
    </citation>
    <scope>NUCLEOTIDE SEQUENCE [LARGE SCALE MRNA]</scope>
    <source>
        <strain>Hereford</strain>
        <tissue>Brain cortex</tissue>
    </source>
</reference>
<proteinExistence type="evidence at transcript level"/>
<name>TIM23_BOVIN</name>
<dbReference type="EMBL" id="BC134628">
    <property type="protein sequence ID" value="AAI34629.1"/>
    <property type="molecule type" value="mRNA"/>
</dbReference>
<dbReference type="RefSeq" id="NP_001077127.1">
    <property type="nucleotide sequence ID" value="NM_001083658.1"/>
</dbReference>
<dbReference type="SMR" id="A4IFL0"/>
<dbReference type="FunCoup" id="A4IFL0">
    <property type="interactions" value="2020"/>
</dbReference>
<dbReference type="STRING" id="9913.ENSBTAP00000015525"/>
<dbReference type="PaxDb" id="9913-ENSBTAP00000015525"/>
<dbReference type="Ensembl" id="ENSBTAT00000015525.6">
    <property type="protein sequence ID" value="ENSBTAP00000015525.4"/>
    <property type="gene ID" value="ENSBTAG00000011694.6"/>
</dbReference>
<dbReference type="GeneID" id="509841"/>
<dbReference type="KEGG" id="bta:509841"/>
<dbReference type="CTD" id="100287932"/>
<dbReference type="VEuPathDB" id="HostDB:ENSBTAG00000011694"/>
<dbReference type="eggNOG" id="KOG3324">
    <property type="taxonomic scope" value="Eukaryota"/>
</dbReference>
<dbReference type="GeneTree" id="ENSGT00390000001094"/>
<dbReference type="HOGENOM" id="CLU_063935_2_0_1"/>
<dbReference type="InParanoid" id="A4IFL0"/>
<dbReference type="OMA" id="DNDNIWS"/>
<dbReference type="OrthoDB" id="159299at2759"/>
<dbReference type="TreeFam" id="TF106196"/>
<dbReference type="Reactome" id="R-BTA-1268020">
    <property type="pathway name" value="Mitochondrial protein import"/>
</dbReference>
<dbReference type="Proteomes" id="UP000009136">
    <property type="component" value="Chromosome 28"/>
</dbReference>
<dbReference type="Bgee" id="ENSBTAG00000011694">
    <property type="expression patterns" value="Expressed in oocyte and 107 other cell types or tissues"/>
</dbReference>
<dbReference type="GO" id="GO:0005744">
    <property type="term" value="C:TIM23 mitochondrial import inner membrane translocase complex"/>
    <property type="evidence" value="ECO:0000318"/>
    <property type="project" value="GO_Central"/>
</dbReference>
<dbReference type="GO" id="GO:0008320">
    <property type="term" value="F:protein transmembrane transporter activity"/>
    <property type="evidence" value="ECO:0000318"/>
    <property type="project" value="GO_Central"/>
</dbReference>
<dbReference type="GO" id="GO:0030150">
    <property type="term" value="P:protein import into mitochondrial matrix"/>
    <property type="evidence" value="ECO:0000318"/>
    <property type="project" value="GO_Central"/>
</dbReference>
<dbReference type="GO" id="GO:0061734">
    <property type="term" value="P:type 2 mitophagy"/>
    <property type="evidence" value="ECO:0000250"/>
    <property type="project" value="UniProtKB"/>
</dbReference>
<dbReference type="InterPro" id="IPR005681">
    <property type="entry name" value="Tim23"/>
</dbReference>
<dbReference type="InterPro" id="IPR045238">
    <property type="entry name" value="Tim23-like"/>
</dbReference>
<dbReference type="NCBIfam" id="TIGR00983">
    <property type="entry name" value="3a0801s02tim23"/>
    <property type="match status" value="1"/>
</dbReference>
<dbReference type="PANTHER" id="PTHR15371:SF39">
    <property type="entry name" value="MITOCHONDRIAL IMPORT INNER MEMBRANE TRANSLOCASE SUBUNIT TIM23"/>
    <property type="match status" value="1"/>
</dbReference>
<dbReference type="PANTHER" id="PTHR15371">
    <property type="entry name" value="TIM23"/>
    <property type="match status" value="1"/>
</dbReference>
<dbReference type="Pfam" id="PF02466">
    <property type="entry name" value="Tim17"/>
    <property type="match status" value="1"/>
</dbReference>
<accession>A4IFL0</accession>